<reference key="1">
    <citation type="submission" date="2003-03" db="EMBL/GenBank/DDBJ databases">
        <authorList>
            <consortium name="NIH - Zebrafish Gene Collection (ZGC) project"/>
        </authorList>
    </citation>
    <scope>NUCLEOTIDE SEQUENCE [LARGE SCALE MRNA]</scope>
</reference>
<comment type="function">
    <text evidence="1">Acts as a molecular chaperone for G protein-coupled receptors, regulating their biogenesis and exit from the ER.</text>
</comment>
<comment type="subcellular location">
    <subcellularLocation>
        <location evidence="1">Endoplasmic reticulum membrane</location>
    </subcellularLocation>
    <text evidence="1">Associated with the cytosolic side.</text>
</comment>
<accession>Q7ZUV0</accession>
<evidence type="ECO:0000250" key="1"/>
<evidence type="ECO:0000256" key="2">
    <source>
        <dbReference type="SAM" id="MobiDB-lite"/>
    </source>
</evidence>
<gene>
    <name type="primary">ankrd13c</name>
    <name type="ORF">zgc:56077</name>
</gene>
<sequence>MTGEKIRSVRKERKSGLDLLEPDEEPAATGPAKHRGSKIFSGGNHRISRSSSSPGDPDGAYPVHECVFRGDVRRLSSLIRTQNIAQKDVHGNTPLHLAVMMGHKECAHLLLAHNAPVKVKNAQGWSPLAEAISYGDRQMITALLRKLKQQSRESVEDKRPRLLKALKELGDFYLELHWDFQSWVPLLSRILPSDACKIYKQGINIRLDTTLIDFTDMKCQRGDLSFIFCGDAPPSESFVVLDNEQKVYQRIHHEESEMETEEEVDILMSSDVYSATLSTKSITFSRAQTGWLFREDKTERVGNFLADFYMVNGLVLESRKRREHLSEEDILRNKAIMESFSKGGSLIEQNFEPMRRQSLTPPSPNTISWEEYITAETGKAPHLGRELVCKESKKNFKATVAMSPDFPLGIESLLNVLEVIAPFKHFNKLREFVQMKLPPGFPVKLDIPVFPTITATVTFQEFRYDEFDESIFTIPSDYKGDPSRFPDL</sequence>
<keyword id="KW-0040">ANK repeat</keyword>
<keyword id="KW-0143">Chaperone</keyword>
<keyword id="KW-0256">Endoplasmic reticulum</keyword>
<keyword id="KW-0472">Membrane</keyword>
<keyword id="KW-1185">Reference proteome</keyword>
<keyword id="KW-0677">Repeat</keyword>
<organism>
    <name type="scientific">Danio rerio</name>
    <name type="common">Zebrafish</name>
    <name type="synonym">Brachydanio rerio</name>
    <dbReference type="NCBI Taxonomy" id="7955"/>
    <lineage>
        <taxon>Eukaryota</taxon>
        <taxon>Metazoa</taxon>
        <taxon>Chordata</taxon>
        <taxon>Craniata</taxon>
        <taxon>Vertebrata</taxon>
        <taxon>Euteleostomi</taxon>
        <taxon>Actinopterygii</taxon>
        <taxon>Neopterygii</taxon>
        <taxon>Teleostei</taxon>
        <taxon>Ostariophysi</taxon>
        <taxon>Cypriniformes</taxon>
        <taxon>Danionidae</taxon>
        <taxon>Danioninae</taxon>
        <taxon>Danio</taxon>
    </lineage>
</organism>
<feature type="chain" id="PRO_0000240647" description="Ankyrin repeat domain-containing protein 13C">
    <location>
        <begin position="1"/>
        <end position="488"/>
    </location>
</feature>
<feature type="repeat" description="ANK 1">
    <location>
        <begin position="58"/>
        <end position="87"/>
    </location>
</feature>
<feature type="repeat" description="ANK 2">
    <location>
        <begin position="90"/>
        <end position="119"/>
    </location>
</feature>
<feature type="repeat" description="ANK 3">
    <location>
        <begin position="123"/>
        <end position="152"/>
    </location>
</feature>
<feature type="region of interest" description="Disordered" evidence="2">
    <location>
        <begin position="1"/>
        <end position="60"/>
    </location>
</feature>
<feature type="compositionally biased region" description="Low complexity" evidence="2">
    <location>
        <begin position="41"/>
        <end position="59"/>
    </location>
</feature>
<dbReference type="EMBL" id="BC047821">
    <property type="protein sequence ID" value="AAH47821.1"/>
    <property type="molecule type" value="mRNA"/>
</dbReference>
<dbReference type="RefSeq" id="NP_999855.1">
    <property type="nucleotide sequence ID" value="NM_214690.1"/>
</dbReference>
<dbReference type="SMR" id="Q7ZUV0"/>
<dbReference type="FunCoup" id="Q7ZUV0">
    <property type="interactions" value="2047"/>
</dbReference>
<dbReference type="PaxDb" id="7955-ENSDARP00000062236"/>
<dbReference type="GeneID" id="325167"/>
<dbReference type="KEGG" id="dre:325167"/>
<dbReference type="AGR" id="ZFIN:ZDB-GENE-030131-3892"/>
<dbReference type="CTD" id="81573"/>
<dbReference type="ZFIN" id="ZDB-GENE-030131-3892">
    <property type="gene designation" value="ankrd13c"/>
</dbReference>
<dbReference type="eggNOG" id="KOG0522">
    <property type="taxonomic scope" value="Eukaryota"/>
</dbReference>
<dbReference type="InParanoid" id="Q7ZUV0"/>
<dbReference type="OrthoDB" id="1585644at2759"/>
<dbReference type="PhylomeDB" id="Q7ZUV0"/>
<dbReference type="PRO" id="PR:Q7ZUV0"/>
<dbReference type="Proteomes" id="UP000000437">
    <property type="component" value="Chromosome 11"/>
</dbReference>
<dbReference type="GO" id="GO:0005737">
    <property type="term" value="C:cytoplasm"/>
    <property type="evidence" value="ECO:0000318"/>
    <property type="project" value="GO_Central"/>
</dbReference>
<dbReference type="GO" id="GO:0005789">
    <property type="term" value="C:endoplasmic reticulum membrane"/>
    <property type="evidence" value="ECO:0007669"/>
    <property type="project" value="UniProtKB-SubCell"/>
</dbReference>
<dbReference type="GO" id="GO:0005102">
    <property type="term" value="F:signaling receptor binding"/>
    <property type="evidence" value="ECO:0000318"/>
    <property type="project" value="GO_Central"/>
</dbReference>
<dbReference type="GO" id="GO:0006621">
    <property type="term" value="P:protein retention in ER lumen"/>
    <property type="evidence" value="ECO:0000318"/>
    <property type="project" value="GO_Central"/>
</dbReference>
<dbReference type="FunFam" id="1.25.40.20:FF:000073">
    <property type="entry name" value="Ankyrin repeat domain-containing protein 13C"/>
    <property type="match status" value="1"/>
</dbReference>
<dbReference type="Gene3D" id="1.25.40.20">
    <property type="entry name" value="Ankyrin repeat-containing domain"/>
    <property type="match status" value="1"/>
</dbReference>
<dbReference type="InterPro" id="IPR021832">
    <property type="entry name" value="ANKRD13"/>
</dbReference>
<dbReference type="InterPro" id="IPR055285">
    <property type="entry name" value="ANKRD13_C"/>
</dbReference>
<dbReference type="InterPro" id="IPR002110">
    <property type="entry name" value="Ankyrin_rpt"/>
</dbReference>
<dbReference type="InterPro" id="IPR036770">
    <property type="entry name" value="Ankyrin_rpt-contain_sf"/>
</dbReference>
<dbReference type="PANTHER" id="PTHR12447">
    <property type="entry name" value="ANKYRIN REPEAT DOMAIN-CONTAINING PROTEIN 13"/>
    <property type="match status" value="1"/>
</dbReference>
<dbReference type="PANTHER" id="PTHR12447:SF25">
    <property type="entry name" value="ANKYRIN REPEAT DOMAIN-CONTAINING PROTEIN 13C"/>
    <property type="match status" value="1"/>
</dbReference>
<dbReference type="Pfam" id="PF12796">
    <property type="entry name" value="Ank_2"/>
    <property type="match status" value="1"/>
</dbReference>
<dbReference type="Pfam" id="PF11904">
    <property type="entry name" value="ANKRD13_C"/>
    <property type="match status" value="1"/>
</dbReference>
<dbReference type="SMART" id="SM00248">
    <property type="entry name" value="ANK"/>
    <property type="match status" value="3"/>
</dbReference>
<dbReference type="SUPFAM" id="SSF48403">
    <property type="entry name" value="Ankyrin repeat"/>
    <property type="match status" value="1"/>
</dbReference>
<dbReference type="PROSITE" id="PS50297">
    <property type="entry name" value="ANK_REP_REGION"/>
    <property type="match status" value="1"/>
</dbReference>
<dbReference type="PROSITE" id="PS50088">
    <property type="entry name" value="ANK_REPEAT"/>
    <property type="match status" value="1"/>
</dbReference>
<protein>
    <recommendedName>
        <fullName>Ankyrin repeat domain-containing protein 13C</fullName>
    </recommendedName>
</protein>
<name>AN13C_DANRE</name>
<proteinExistence type="evidence at transcript level"/>